<proteinExistence type="inferred from homology"/>
<geneLocation type="mitochondrion"/>
<reference key="1">
    <citation type="journal article" date="1999" name="Zool. Sci.">
        <title>Intraspecific variation of mitochondrial cytochrome b gene sequences of the Japanese marten Martes melampus and the sable Martes zibellina (Mustelidae, Carnivora, Mammalia) in Japan.</title>
        <authorList>
            <person name="Kurose N."/>
            <person name="Masuda R."/>
            <person name="Siriaroonrat B."/>
            <person name="Yoshida M.C."/>
        </authorList>
    </citation>
    <scope>NUCLEOTIDE SEQUENCE [GENOMIC DNA]</scope>
    <source>
        <strain>Isolate MME-1</strain>
        <strain>Isolate MME-C1</strain>
        <strain>Isolate MME-G1</strain>
        <strain>Isolate MME-G5</strain>
        <strain>Isolate MME-K1</strain>
        <strain>Isolate MME-K2</strain>
        <strain>Isolate MME-K3</strain>
        <strain>Isolate MME-MR1</strain>
        <strain>Isolate MME-OS1</strain>
        <strain>Isolate MME-TKY1</strain>
        <strain>Isolate MME-TKY3</strain>
        <strain>Isolate MME-TKY4</strain>
        <strain>Isolate MME-TOB1</strain>
        <strain>Isolate MME-TOG1</strain>
        <strain>Isolate MME-TSU1</strain>
    </source>
</reference>
<reference key="2">
    <citation type="journal article" date="2000" name="Genes Genet. Syst.">
        <title>Evolutionary trends of the mitochondrial lineage differentiation in species of genera Martes and Mustela.</title>
        <authorList>
            <person name="Hosoda T."/>
            <person name="Suzuki H."/>
            <person name="Harada M."/>
            <person name="Tsuchiya K."/>
            <person name="Han S.H."/>
            <person name="Zhang Y."/>
            <person name="Kryukov A.P."/>
            <person name="Lin L.K."/>
        </authorList>
    </citation>
    <scope>NUCLEOTIDE SEQUENCE [GENOMIC DNA]</scope>
    <source>
        <strain>Isolate TH017</strain>
    </source>
</reference>
<sequence length="379" mass="42529">MTNIRKTHPLAKIINNSFIDLPAPSNISAWWNFGSLLGICLILQILTGLFLAMHYTSDTATAFSSVTHICRDVNYGWIIRYMHANGASMFFICLFLHVGRGLYYGSYMYPETWNIGIILLFAVMATAFMGYVLPWGQMSFWGATVITNLLSAIPYIGTSLVEWIWGGFSVDKATLTRFFAFHFILPFIVSALAAVHLLFLHETGSNNPSGIPSDSDKIPFHPYYTIKDILGALFLILVLMMLVLFSPDLLGDPDNYIPANPLSTPPHIKPEWYFLFAYAILRSIPNKLGGVLALVFSILVLAIIPLLHTSKQRGMMFRPLSQCLFWLLVADLLTLTWIGGQPVEHPFITIGQLASILYFAILLILMPTISIIENNLLKW</sequence>
<name>CYB_MARME</name>
<feature type="chain" id="PRO_0000061157" description="Cytochrome b">
    <location>
        <begin position="1"/>
        <end position="379"/>
    </location>
</feature>
<feature type="transmembrane region" description="Helical" evidence="2">
    <location>
        <begin position="33"/>
        <end position="53"/>
    </location>
</feature>
<feature type="transmembrane region" description="Helical" evidence="2">
    <location>
        <begin position="77"/>
        <end position="98"/>
    </location>
</feature>
<feature type="transmembrane region" description="Helical" evidence="2">
    <location>
        <begin position="113"/>
        <end position="133"/>
    </location>
</feature>
<feature type="transmembrane region" description="Helical" evidence="2">
    <location>
        <begin position="178"/>
        <end position="198"/>
    </location>
</feature>
<feature type="transmembrane region" description="Helical" evidence="2">
    <location>
        <begin position="226"/>
        <end position="246"/>
    </location>
</feature>
<feature type="transmembrane region" description="Helical" evidence="2">
    <location>
        <begin position="288"/>
        <end position="308"/>
    </location>
</feature>
<feature type="transmembrane region" description="Helical" evidence="2">
    <location>
        <begin position="320"/>
        <end position="340"/>
    </location>
</feature>
<feature type="transmembrane region" description="Helical" evidence="2">
    <location>
        <begin position="347"/>
        <end position="367"/>
    </location>
</feature>
<feature type="binding site" description="axial binding residue" evidence="2">
    <location>
        <position position="83"/>
    </location>
    <ligand>
        <name>heme b</name>
        <dbReference type="ChEBI" id="CHEBI:60344"/>
        <label>b562</label>
    </ligand>
    <ligandPart>
        <name>Fe</name>
        <dbReference type="ChEBI" id="CHEBI:18248"/>
    </ligandPart>
</feature>
<feature type="binding site" description="axial binding residue" evidence="2">
    <location>
        <position position="97"/>
    </location>
    <ligand>
        <name>heme b</name>
        <dbReference type="ChEBI" id="CHEBI:60344"/>
        <label>b566</label>
    </ligand>
    <ligandPart>
        <name>Fe</name>
        <dbReference type="ChEBI" id="CHEBI:18248"/>
    </ligandPart>
</feature>
<feature type="binding site" description="axial binding residue" evidence="2">
    <location>
        <position position="182"/>
    </location>
    <ligand>
        <name>heme b</name>
        <dbReference type="ChEBI" id="CHEBI:60344"/>
        <label>b562</label>
    </ligand>
    <ligandPart>
        <name>Fe</name>
        <dbReference type="ChEBI" id="CHEBI:18248"/>
    </ligandPart>
</feature>
<feature type="binding site" description="axial binding residue" evidence="2">
    <location>
        <position position="196"/>
    </location>
    <ligand>
        <name>heme b</name>
        <dbReference type="ChEBI" id="CHEBI:60344"/>
        <label>b566</label>
    </ligand>
    <ligandPart>
        <name>Fe</name>
        <dbReference type="ChEBI" id="CHEBI:18248"/>
    </ligandPart>
</feature>
<feature type="binding site" evidence="2">
    <location>
        <position position="201"/>
    </location>
    <ligand>
        <name>a ubiquinone</name>
        <dbReference type="ChEBI" id="CHEBI:16389"/>
    </ligand>
</feature>
<feature type="sequence variant" description="In strain: Isolate MME-K2.">
    <original>A</original>
    <variation>T</variation>
    <location>
        <position position="125"/>
    </location>
</feature>
<feature type="sequence variant" description="In strain: Isolate MME-TKY3.">
    <original>I</original>
    <variation>F</variation>
    <location>
        <position position="257"/>
    </location>
</feature>
<feature type="sequence variant" description="In strain: Isolate MME-1, Isolate MME-G1, Isolate MME-G5, Isolate MME-TSU1 and Isolate TH017.">
    <original>S</original>
    <variation>N</variation>
    <location>
        <position position="263"/>
    </location>
</feature>
<feature type="sequence variant" description="In strain: Isolate MME-K2.">
    <original>F</original>
    <variation>L</variation>
    <location>
        <position position="276"/>
    </location>
</feature>
<feature type="sequence variant" description="In strain: Isolate MME-G1, Isolate MME-G5 and Isolate MME-TSU1.">
    <original>I</original>
    <variation>V</variation>
    <location>
        <position position="304"/>
    </location>
</feature>
<feature type="sequence variant" description="In strain: Isolate MME-TKY3.">
    <original>E</original>
    <variation>G</variation>
    <location>
        <position position="344"/>
    </location>
</feature>
<comment type="function">
    <text evidence="2">Component of the ubiquinol-cytochrome c reductase complex (complex III or cytochrome b-c1 complex) that is part of the mitochondrial respiratory chain. The b-c1 complex mediates electron transfer from ubiquinol to cytochrome c. Contributes to the generation of a proton gradient across the mitochondrial membrane that is then used for ATP synthesis.</text>
</comment>
<comment type="cofactor">
    <cofactor evidence="2">
        <name>heme b</name>
        <dbReference type="ChEBI" id="CHEBI:60344"/>
    </cofactor>
    <text evidence="2">Binds 2 heme b groups non-covalently.</text>
</comment>
<comment type="subunit">
    <text evidence="2">The cytochrome bc1 complex contains 11 subunits: 3 respiratory subunits (MT-CYB, CYC1 and UQCRFS1), 2 core proteins (UQCRC1 and UQCRC2) and 6 low-molecular weight proteins (UQCRH/QCR6, UQCRB/QCR7, UQCRQ/QCR8, UQCR10/QCR9, UQCR11/QCR10 and a cleavage product of UQCRFS1). This cytochrome bc1 complex then forms a dimer.</text>
</comment>
<comment type="subcellular location">
    <subcellularLocation>
        <location evidence="2">Mitochondrion inner membrane</location>
        <topology evidence="2">Multi-pass membrane protein</topology>
    </subcellularLocation>
</comment>
<comment type="miscellaneous">
    <text evidence="1">Heme 1 (or BL or b562) is low-potential and absorbs at about 562 nm, and heme 2 (or BH or b566) is high-potential and absorbs at about 566 nm.</text>
</comment>
<comment type="similarity">
    <text evidence="3 4">Belongs to the cytochrome b family.</text>
</comment>
<comment type="caution">
    <text evidence="2">The full-length protein contains only eight transmembrane helices, not nine as predicted by bioinformatics tools.</text>
</comment>
<accession>Q9T3H9</accession>
<accession>Q9T2X6</accession>
<accession>Q9TEB8</accession>
<accession>Q9TEB9</accession>
<accession>Q9TEC0</accession>
<keyword id="KW-0249">Electron transport</keyword>
<keyword id="KW-0349">Heme</keyword>
<keyword id="KW-0408">Iron</keyword>
<keyword id="KW-0472">Membrane</keyword>
<keyword id="KW-0479">Metal-binding</keyword>
<keyword id="KW-0496">Mitochondrion</keyword>
<keyword id="KW-0999">Mitochondrion inner membrane</keyword>
<keyword id="KW-0679">Respiratory chain</keyword>
<keyword id="KW-0812">Transmembrane</keyword>
<keyword id="KW-1133">Transmembrane helix</keyword>
<keyword id="KW-0813">Transport</keyword>
<keyword id="KW-0830">Ubiquinone</keyword>
<protein>
    <recommendedName>
        <fullName>Cytochrome b</fullName>
    </recommendedName>
    <alternativeName>
        <fullName>Complex III subunit 3</fullName>
    </alternativeName>
    <alternativeName>
        <fullName>Complex III subunit III</fullName>
    </alternativeName>
    <alternativeName>
        <fullName>Cytochrome b-c1 complex subunit 3</fullName>
    </alternativeName>
    <alternativeName>
        <fullName>Ubiquinol-cytochrome-c reductase complex cytochrome b subunit</fullName>
    </alternativeName>
</protein>
<evidence type="ECO:0000250" key="1"/>
<evidence type="ECO:0000250" key="2">
    <source>
        <dbReference type="UniProtKB" id="P00157"/>
    </source>
</evidence>
<evidence type="ECO:0000255" key="3">
    <source>
        <dbReference type="PROSITE-ProRule" id="PRU00967"/>
    </source>
</evidence>
<evidence type="ECO:0000255" key="4">
    <source>
        <dbReference type="PROSITE-ProRule" id="PRU00968"/>
    </source>
</evidence>
<dbReference type="EMBL" id="AB012341">
    <property type="protein sequence ID" value="BAA83970.1"/>
    <property type="molecule type" value="Genomic_DNA"/>
</dbReference>
<dbReference type="EMBL" id="AB012342">
    <property type="protein sequence ID" value="BAA83971.1"/>
    <property type="molecule type" value="Genomic_DNA"/>
</dbReference>
<dbReference type="EMBL" id="AB012343">
    <property type="protein sequence ID" value="BAA83972.1"/>
    <property type="molecule type" value="Genomic_DNA"/>
</dbReference>
<dbReference type="EMBL" id="AB012344">
    <property type="protein sequence ID" value="BAA83973.1"/>
    <property type="molecule type" value="Genomic_DNA"/>
</dbReference>
<dbReference type="EMBL" id="AB012345">
    <property type="protein sequence ID" value="BAA74519.1"/>
    <property type="molecule type" value="Genomic_DNA"/>
</dbReference>
<dbReference type="EMBL" id="AB012346">
    <property type="protein sequence ID" value="BAA83974.1"/>
    <property type="molecule type" value="Genomic_DNA"/>
</dbReference>
<dbReference type="EMBL" id="AB012347">
    <property type="protein sequence ID" value="BAA83975.1"/>
    <property type="molecule type" value="Genomic_DNA"/>
</dbReference>
<dbReference type="EMBL" id="AB012348">
    <property type="protein sequence ID" value="BAA83976.1"/>
    <property type="molecule type" value="Genomic_DNA"/>
</dbReference>
<dbReference type="EMBL" id="AB012349">
    <property type="protein sequence ID" value="BAA83977.1"/>
    <property type="molecule type" value="Genomic_DNA"/>
</dbReference>
<dbReference type="EMBL" id="AB012350">
    <property type="protein sequence ID" value="BAA83978.1"/>
    <property type="molecule type" value="Genomic_DNA"/>
</dbReference>
<dbReference type="EMBL" id="AB012351">
    <property type="protein sequence ID" value="BAA83979.1"/>
    <property type="molecule type" value="Genomic_DNA"/>
</dbReference>
<dbReference type="EMBL" id="AB012352">
    <property type="protein sequence ID" value="BAA83980.1"/>
    <property type="molecule type" value="Genomic_DNA"/>
</dbReference>
<dbReference type="EMBL" id="AB012353">
    <property type="protein sequence ID" value="BAA83981.1"/>
    <property type="molecule type" value="Genomic_DNA"/>
</dbReference>
<dbReference type="EMBL" id="AB012354">
    <property type="protein sequence ID" value="BAA83982.1"/>
    <property type="molecule type" value="Genomic_DNA"/>
</dbReference>
<dbReference type="EMBL" id="AB012355">
    <property type="protein sequence ID" value="BAA83983.1"/>
    <property type="molecule type" value="Genomic_DNA"/>
</dbReference>
<dbReference type="EMBL" id="AB051238">
    <property type="protein sequence ID" value="BAB18190.1"/>
    <property type="molecule type" value="Genomic_DNA"/>
</dbReference>
<dbReference type="RefSeq" id="YP_001382107.1">
    <property type="nucleotide sequence ID" value="NC_009678.1"/>
</dbReference>
<dbReference type="SMR" id="Q9T3H9"/>
<dbReference type="GO" id="GO:0005743">
    <property type="term" value="C:mitochondrial inner membrane"/>
    <property type="evidence" value="ECO:0007669"/>
    <property type="project" value="UniProtKB-SubCell"/>
</dbReference>
<dbReference type="GO" id="GO:0045275">
    <property type="term" value="C:respiratory chain complex III"/>
    <property type="evidence" value="ECO:0007669"/>
    <property type="project" value="InterPro"/>
</dbReference>
<dbReference type="GO" id="GO:0046872">
    <property type="term" value="F:metal ion binding"/>
    <property type="evidence" value="ECO:0007669"/>
    <property type="project" value="UniProtKB-KW"/>
</dbReference>
<dbReference type="GO" id="GO:0008121">
    <property type="term" value="F:ubiquinol-cytochrome-c reductase activity"/>
    <property type="evidence" value="ECO:0007669"/>
    <property type="project" value="InterPro"/>
</dbReference>
<dbReference type="GO" id="GO:0006122">
    <property type="term" value="P:mitochondrial electron transport, ubiquinol to cytochrome c"/>
    <property type="evidence" value="ECO:0007669"/>
    <property type="project" value="TreeGrafter"/>
</dbReference>
<dbReference type="CDD" id="cd00290">
    <property type="entry name" value="cytochrome_b_C"/>
    <property type="match status" value="1"/>
</dbReference>
<dbReference type="CDD" id="cd00284">
    <property type="entry name" value="Cytochrome_b_N"/>
    <property type="match status" value="1"/>
</dbReference>
<dbReference type="FunFam" id="1.20.810.10:FF:000002">
    <property type="entry name" value="Cytochrome b"/>
    <property type="match status" value="1"/>
</dbReference>
<dbReference type="Gene3D" id="1.20.810.10">
    <property type="entry name" value="Cytochrome Bc1 Complex, Chain C"/>
    <property type="match status" value="1"/>
</dbReference>
<dbReference type="InterPro" id="IPR005798">
    <property type="entry name" value="Cyt_b/b6_C"/>
</dbReference>
<dbReference type="InterPro" id="IPR036150">
    <property type="entry name" value="Cyt_b/b6_C_sf"/>
</dbReference>
<dbReference type="InterPro" id="IPR005797">
    <property type="entry name" value="Cyt_b/b6_N"/>
</dbReference>
<dbReference type="InterPro" id="IPR027387">
    <property type="entry name" value="Cytb/b6-like_sf"/>
</dbReference>
<dbReference type="InterPro" id="IPR030689">
    <property type="entry name" value="Cytochrome_b"/>
</dbReference>
<dbReference type="InterPro" id="IPR048260">
    <property type="entry name" value="Cytochrome_b_C_euk/bac"/>
</dbReference>
<dbReference type="InterPro" id="IPR048259">
    <property type="entry name" value="Cytochrome_b_N_euk/bac"/>
</dbReference>
<dbReference type="InterPro" id="IPR016174">
    <property type="entry name" value="Di-haem_cyt_TM"/>
</dbReference>
<dbReference type="PANTHER" id="PTHR19271">
    <property type="entry name" value="CYTOCHROME B"/>
    <property type="match status" value="1"/>
</dbReference>
<dbReference type="PANTHER" id="PTHR19271:SF16">
    <property type="entry name" value="CYTOCHROME B"/>
    <property type="match status" value="1"/>
</dbReference>
<dbReference type="Pfam" id="PF00032">
    <property type="entry name" value="Cytochrom_B_C"/>
    <property type="match status" value="1"/>
</dbReference>
<dbReference type="Pfam" id="PF00033">
    <property type="entry name" value="Cytochrome_B"/>
    <property type="match status" value="1"/>
</dbReference>
<dbReference type="PIRSF" id="PIRSF038885">
    <property type="entry name" value="COB"/>
    <property type="match status" value="1"/>
</dbReference>
<dbReference type="SUPFAM" id="SSF81648">
    <property type="entry name" value="a domain/subunit of cytochrome bc1 complex (Ubiquinol-cytochrome c reductase)"/>
    <property type="match status" value="1"/>
</dbReference>
<dbReference type="SUPFAM" id="SSF81342">
    <property type="entry name" value="Transmembrane di-heme cytochromes"/>
    <property type="match status" value="1"/>
</dbReference>
<dbReference type="PROSITE" id="PS51003">
    <property type="entry name" value="CYTB_CTER"/>
    <property type="match status" value="1"/>
</dbReference>
<dbReference type="PROSITE" id="PS51002">
    <property type="entry name" value="CYTB_NTER"/>
    <property type="match status" value="1"/>
</dbReference>
<organism>
    <name type="scientific">Martes melampus</name>
    <name type="common">Japanese marten</name>
    <dbReference type="NCBI Taxonomy" id="36721"/>
    <lineage>
        <taxon>Eukaryota</taxon>
        <taxon>Metazoa</taxon>
        <taxon>Chordata</taxon>
        <taxon>Craniata</taxon>
        <taxon>Vertebrata</taxon>
        <taxon>Euteleostomi</taxon>
        <taxon>Mammalia</taxon>
        <taxon>Eutheria</taxon>
        <taxon>Laurasiatheria</taxon>
        <taxon>Carnivora</taxon>
        <taxon>Caniformia</taxon>
        <taxon>Musteloidea</taxon>
        <taxon>Mustelidae</taxon>
        <taxon>Guloninae</taxon>
        <taxon>Martes</taxon>
    </lineage>
</organism>
<gene>
    <name type="primary">MT-CYB</name>
    <name type="synonym">COB</name>
    <name type="synonym">CYTB</name>
    <name type="synonym">MTCYB</name>
</gene>